<reference key="1">
    <citation type="journal article" date="2009" name="J. Bacteriol.">
        <title>Complete genome sequence of Haemophilus parasuis SH0165.</title>
        <authorList>
            <person name="Yue M."/>
            <person name="Yang F."/>
            <person name="Yang J."/>
            <person name="Bei W."/>
            <person name="Cai X."/>
            <person name="Chen L."/>
            <person name="Dong J."/>
            <person name="Zhou R."/>
            <person name="Jin M."/>
            <person name="Jin Q."/>
            <person name="Chen H."/>
        </authorList>
    </citation>
    <scope>NUCLEOTIDE SEQUENCE [LARGE SCALE GENOMIC DNA]</scope>
    <source>
        <strain>SH0165</strain>
    </source>
</reference>
<sequence>MNYNKKIIHIDMDCFYASIEIRNNPSLKGKPVAVGGKANQRGVLTTCNYEARKFGLHSAMSTSQALKRCPNLILLPVNMSLYKAVSEQIHCIFRRYTDIIEPISLDEAYLDVTACKQHSGSATWIAQAIRQDIWQELQLTSSAGIAPLKFLAKIASDQNKPNGQFVICPEEVADFVKTLPLKKISGVGKVAQEKLAQLGFITCGDIQQADQALIYQQFGKFGQRLWDFCHGIDPREVEPHRPRKSLAVENTLLSDLDTLTEAEDVVKSHYQTLLFRLQRNWGDKPLSDLKKIGIKLKFDDFTQTTLERTTDGIAEHHFLQLLQQIWQRRKGRKIRLIGLNVHFPEEKITKQLNLWE</sequence>
<organism>
    <name type="scientific">Glaesserella parasuis serovar 5 (strain SH0165)</name>
    <name type="common">Haemophilus parasuis</name>
    <dbReference type="NCBI Taxonomy" id="557723"/>
    <lineage>
        <taxon>Bacteria</taxon>
        <taxon>Pseudomonadati</taxon>
        <taxon>Pseudomonadota</taxon>
        <taxon>Gammaproteobacteria</taxon>
        <taxon>Pasteurellales</taxon>
        <taxon>Pasteurellaceae</taxon>
        <taxon>Glaesserella</taxon>
    </lineage>
</organism>
<evidence type="ECO:0000255" key="1">
    <source>
        <dbReference type="HAMAP-Rule" id="MF_01113"/>
    </source>
</evidence>
<protein>
    <recommendedName>
        <fullName evidence="1">DNA polymerase IV</fullName>
        <shortName evidence="1">Pol IV</shortName>
        <ecNumber evidence="1">2.7.7.7</ecNumber>
    </recommendedName>
</protein>
<feature type="chain" id="PRO_1000164003" description="DNA polymerase IV">
    <location>
        <begin position="1"/>
        <end position="356"/>
    </location>
</feature>
<feature type="domain" description="UmuC" evidence="1">
    <location>
        <begin position="7"/>
        <end position="188"/>
    </location>
</feature>
<feature type="active site" evidence="1">
    <location>
        <position position="107"/>
    </location>
</feature>
<feature type="binding site" evidence="1">
    <location>
        <position position="11"/>
    </location>
    <ligand>
        <name>Mg(2+)</name>
        <dbReference type="ChEBI" id="CHEBI:18420"/>
    </ligand>
</feature>
<feature type="binding site" evidence="1">
    <location>
        <position position="106"/>
    </location>
    <ligand>
        <name>Mg(2+)</name>
        <dbReference type="ChEBI" id="CHEBI:18420"/>
    </ligand>
</feature>
<feature type="site" description="Substrate discrimination" evidence="1">
    <location>
        <position position="16"/>
    </location>
</feature>
<gene>
    <name evidence="1" type="primary">dinB</name>
    <name type="ordered locus">HAPS_0809</name>
</gene>
<comment type="function">
    <text evidence="1">Poorly processive, error-prone DNA polymerase involved in untargeted mutagenesis. Copies undamaged DNA at stalled replication forks, which arise in vivo from mismatched or misaligned primer ends. These misaligned primers can be extended by PolIV. Exhibits no 3'-5' exonuclease (proofreading) activity. May be involved in translesional synthesis, in conjunction with the beta clamp from PolIII.</text>
</comment>
<comment type="catalytic activity">
    <reaction evidence="1">
        <text>DNA(n) + a 2'-deoxyribonucleoside 5'-triphosphate = DNA(n+1) + diphosphate</text>
        <dbReference type="Rhea" id="RHEA:22508"/>
        <dbReference type="Rhea" id="RHEA-COMP:17339"/>
        <dbReference type="Rhea" id="RHEA-COMP:17340"/>
        <dbReference type="ChEBI" id="CHEBI:33019"/>
        <dbReference type="ChEBI" id="CHEBI:61560"/>
        <dbReference type="ChEBI" id="CHEBI:173112"/>
        <dbReference type="EC" id="2.7.7.7"/>
    </reaction>
</comment>
<comment type="cofactor">
    <cofactor evidence="1">
        <name>Mg(2+)</name>
        <dbReference type="ChEBI" id="CHEBI:18420"/>
    </cofactor>
    <text evidence="1">Binds 2 magnesium ions per subunit.</text>
</comment>
<comment type="subunit">
    <text evidence="1">Monomer.</text>
</comment>
<comment type="subcellular location">
    <subcellularLocation>
        <location evidence="1">Cytoplasm</location>
    </subcellularLocation>
</comment>
<comment type="similarity">
    <text evidence="1">Belongs to the DNA polymerase type-Y family.</text>
</comment>
<accession>B8F542</accession>
<proteinExistence type="inferred from homology"/>
<name>DPO4_GLAP5</name>
<dbReference type="EC" id="2.7.7.7" evidence="1"/>
<dbReference type="EMBL" id="CP001321">
    <property type="protein sequence ID" value="ACL32444.1"/>
    <property type="molecule type" value="Genomic_DNA"/>
</dbReference>
<dbReference type="RefSeq" id="WP_005714148.1">
    <property type="nucleotide sequence ID" value="NC_011852.1"/>
</dbReference>
<dbReference type="SMR" id="B8F542"/>
<dbReference type="STRING" id="557723.HAPS_0809"/>
<dbReference type="GeneID" id="66619106"/>
<dbReference type="KEGG" id="hap:HAPS_0809"/>
<dbReference type="HOGENOM" id="CLU_012348_1_2_6"/>
<dbReference type="Proteomes" id="UP000006743">
    <property type="component" value="Chromosome"/>
</dbReference>
<dbReference type="GO" id="GO:0005829">
    <property type="term" value="C:cytosol"/>
    <property type="evidence" value="ECO:0007669"/>
    <property type="project" value="TreeGrafter"/>
</dbReference>
<dbReference type="GO" id="GO:0003684">
    <property type="term" value="F:damaged DNA binding"/>
    <property type="evidence" value="ECO:0007669"/>
    <property type="project" value="InterPro"/>
</dbReference>
<dbReference type="GO" id="GO:0003887">
    <property type="term" value="F:DNA-directed DNA polymerase activity"/>
    <property type="evidence" value="ECO:0007669"/>
    <property type="project" value="UniProtKB-UniRule"/>
</dbReference>
<dbReference type="GO" id="GO:0000287">
    <property type="term" value="F:magnesium ion binding"/>
    <property type="evidence" value="ECO:0007669"/>
    <property type="project" value="UniProtKB-UniRule"/>
</dbReference>
<dbReference type="GO" id="GO:0006261">
    <property type="term" value="P:DNA-templated DNA replication"/>
    <property type="evidence" value="ECO:0007669"/>
    <property type="project" value="UniProtKB-UniRule"/>
</dbReference>
<dbReference type="GO" id="GO:0042276">
    <property type="term" value="P:error-prone translesion synthesis"/>
    <property type="evidence" value="ECO:0007669"/>
    <property type="project" value="TreeGrafter"/>
</dbReference>
<dbReference type="GO" id="GO:0009432">
    <property type="term" value="P:SOS response"/>
    <property type="evidence" value="ECO:0007669"/>
    <property type="project" value="TreeGrafter"/>
</dbReference>
<dbReference type="CDD" id="cd03586">
    <property type="entry name" value="PolY_Pol_IV_kappa"/>
    <property type="match status" value="1"/>
</dbReference>
<dbReference type="FunFam" id="1.10.150.20:FF:000019">
    <property type="entry name" value="DNA polymerase IV"/>
    <property type="match status" value="1"/>
</dbReference>
<dbReference type="FunFam" id="3.40.1170.60:FF:000001">
    <property type="entry name" value="DNA polymerase IV"/>
    <property type="match status" value="1"/>
</dbReference>
<dbReference type="Gene3D" id="3.30.70.270">
    <property type="match status" value="1"/>
</dbReference>
<dbReference type="Gene3D" id="3.40.1170.60">
    <property type="match status" value="1"/>
</dbReference>
<dbReference type="Gene3D" id="1.10.150.20">
    <property type="entry name" value="5' to 3' exonuclease, C-terminal subdomain"/>
    <property type="match status" value="1"/>
</dbReference>
<dbReference type="Gene3D" id="3.30.1490.100">
    <property type="entry name" value="DNA polymerase, Y-family, little finger domain"/>
    <property type="match status" value="1"/>
</dbReference>
<dbReference type="HAMAP" id="MF_01113">
    <property type="entry name" value="DNApol_IV"/>
    <property type="match status" value="1"/>
</dbReference>
<dbReference type="InterPro" id="IPR043502">
    <property type="entry name" value="DNA/RNA_pol_sf"/>
</dbReference>
<dbReference type="InterPro" id="IPR036775">
    <property type="entry name" value="DNA_pol_Y-fam_lit_finger_sf"/>
</dbReference>
<dbReference type="InterPro" id="IPR017961">
    <property type="entry name" value="DNA_pol_Y-fam_little_finger"/>
</dbReference>
<dbReference type="InterPro" id="IPR050116">
    <property type="entry name" value="DNA_polymerase-Y"/>
</dbReference>
<dbReference type="InterPro" id="IPR022880">
    <property type="entry name" value="DNApol_IV"/>
</dbReference>
<dbReference type="InterPro" id="IPR053848">
    <property type="entry name" value="IMS_HHH_1"/>
</dbReference>
<dbReference type="InterPro" id="IPR043128">
    <property type="entry name" value="Rev_trsase/Diguanyl_cyclase"/>
</dbReference>
<dbReference type="InterPro" id="IPR001126">
    <property type="entry name" value="UmuC"/>
</dbReference>
<dbReference type="NCBIfam" id="NF002677">
    <property type="entry name" value="PRK02406.1"/>
    <property type="match status" value="1"/>
</dbReference>
<dbReference type="PANTHER" id="PTHR11076:SF33">
    <property type="entry name" value="DNA POLYMERASE KAPPA"/>
    <property type="match status" value="1"/>
</dbReference>
<dbReference type="PANTHER" id="PTHR11076">
    <property type="entry name" value="DNA REPAIR POLYMERASE UMUC / TRANSFERASE FAMILY MEMBER"/>
    <property type="match status" value="1"/>
</dbReference>
<dbReference type="Pfam" id="PF00817">
    <property type="entry name" value="IMS"/>
    <property type="match status" value="1"/>
</dbReference>
<dbReference type="Pfam" id="PF11799">
    <property type="entry name" value="IMS_C"/>
    <property type="match status" value="1"/>
</dbReference>
<dbReference type="Pfam" id="PF21999">
    <property type="entry name" value="IMS_HHH_1"/>
    <property type="match status" value="1"/>
</dbReference>
<dbReference type="SUPFAM" id="SSF56672">
    <property type="entry name" value="DNA/RNA polymerases"/>
    <property type="match status" value="1"/>
</dbReference>
<dbReference type="SUPFAM" id="SSF100879">
    <property type="entry name" value="Lesion bypass DNA polymerase (Y-family), little finger domain"/>
    <property type="match status" value="1"/>
</dbReference>
<dbReference type="PROSITE" id="PS50173">
    <property type="entry name" value="UMUC"/>
    <property type="match status" value="1"/>
</dbReference>
<keyword id="KW-0963">Cytoplasm</keyword>
<keyword id="KW-0227">DNA damage</keyword>
<keyword id="KW-0234">DNA repair</keyword>
<keyword id="KW-0235">DNA replication</keyword>
<keyword id="KW-0238">DNA-binding</keyword>
<keyword id="KW-0239">DNA-directed DNA polymerase</keyword>
<keyword id="KW-0460">Magnesium</keyword>
<keyword id="KW-0479">Metal-binding</keyword>
<keyword id="KW-0515">Mutator protein</keyword>
<keyword id="KW-0548">Nucleotidyltransferase</keyword>
<keyword id="KW-1185">Reference proteome</keyword>
<keyword id="KW-0808">Transferase</keyword>